<dbReference type="EC" id="6.1.1.21"/>
<dbReference type="EMBL" id="AE000783">
    <property type="protein sequence ID" value="AAC66531.2"/>
    <property type="molecule type" value="Genomic_DNA"/>
</dbReference>
<dbReference type="PIR" id="G70116">
    <property type="entry name" value="G70116"/>
</dbReference>
<dbReference type="RefSeq" id="NP_212269.2">
    <property type="nucleotide sequence ID" value="NC_001318.1"/>
</dbReference>
<dbReference type="RefSeq" id="WP_002656264.1">
    <property type="nucleotide sequence ID" value="NC_001318.1"/>
</dbReference>
<dbReference type="SMR" id="O51160"/>
<dbReference type="STRING" id="224326.BB_0135"/>
<dbReference type="PaxDb" id="224326-BB_0135"/>
<dbReference type="EnsemblBacteria" id="AAC66531">
    <property type="protein sequence ID" value="AAC66531"/>
    <property type="gene ID" value="BB_0135"/>
</dbReference>
<dbReference type="GeneID" id="56568083"/>
<dbReference type="KEGG" id="bbu:BB_0135"/>
<dbReference type="PATRIC" id="fig|224326.49.peg.533"/>
<dbReference type="HOGENOM" id="CLU_025113_3_0_12"/>
<dbReference type="OrthoDB" id="9800814at2"/>
<dbReference type="Proteomes" id="UP000001807">
    <property type="component" value="Chromosome"/>
</dbReference>
<dbReference type="GO" id="GO:0005737">
    <property type="term" value="C:cytoplasm"/>
    <property type="evidence" value="ECO:0007669"/>
    <property type="project" value="UniProtKB-SubCell"/>
</dbReference>
<dbReference type="GO" id="GO:0005524">
    <property type="term" value="F:ATP binding"/>
    <property type="evidence" value="ECO:0007669"/>
    <property type="project" value="UniProtKB-UniRule"/>
</dbReference>
<dbReference type="GO" id="GO:0004821">
    <property type="term" value="F:histidine-tRNA ligase activity"/>
    <property type="evidence" value="ECO:0007669"/>
    <property type="project" value="UniProtKB-UniRule"/>
</dbReference>
<dbReference type="GO" id="GO:0006427">
    <property type="term" value="P:histidyl-tRNA aminoacylation"/>
    <property type="evidence" value="ECO:0007669"/>
    <property type="project" value="UniProtKB-UniRule"/>
</dbReference>
<dbReference type="CDD" id="cd00773">
    <property type="entry name" value="HisRS-like_core"/>
    <property type="match status" value="1"/>
</dbReference>
<dbReference type="CDD" id="cd00859">
    <property type="entry name" value="HisRS_anticodon"/>
    <property type="match status" value="1"/>
</dbReference>
<dbReference type="Gene3D" id="3.40.50.800">
    <property type="entry name" value="Anticodon-binding domain"/>
    <property type="match status" value="1"/>
</dbReference>
<dbReference type="Gene3D" id="3.30.930.10">
    <property type="entry name" value="Bira Bifunctional Protein, Domain 2"/>
    <property type="match status" value="1"/>
</dbReference>
<dbReference type="HAMAP" id="MF_00127">
    <property type="entry name" value="His_tRNA_synth"/>
    <property type="match status" value="1"/>
</dbReference>
<dbReference type="InterPro" id="IPR006195">
    <property type="entry name" value="aa-tRNA-synth_II"/>
</dbReference>
<dbReference type="InterPro" id="IPR045864">
    <property type="entry name" value="aa-tRNA-synth_II/BPL/LPL"/>
</dbReference>
<dbReference type="InterPro" id="IPR004154">
    <property type="entry name" value="Anticodon-bd"/>
</dbReference>
<dbReference type="InterPro" id="IPR036621">
    <property type="entry name" value="Anticodon-bd_dom_sf"/>
</dbReference>
<dbReference type="InterPro" id="IPR015807">
    <property type="entry name" value="His-tRNA-ligase"/>
</dbReference>
<dbReference type="InterPro" id="IPR041715">
    <property type="entry name" value="HisRS-like_core"/>
</dbReference>
<dbReference type="InterPro" id="IPR004516">
    <property type="entry name" value="HisRS/HisZ"/>
</dbReference>
<dbReference type="InterPro" id="IPR033656">
    <property type="entry name" value="HisRS_anticodon"/>
</dbReference>
<dbReference type="NCBIfam" id="TIGR00442">
    <property type="entry name" value="hisS"/>
    <property type="match status" value="1"/>
</dbReference>
<dbReference type="PANTHER" id="PTHR11476:SF7">
    <property type="entry name" value="HISTIDINE--TRNA LIGASE"/>
    <property type="match status" value="1"/>
</dbReference>
<dbReference type="PANTHER" id="PTHR11476">
    <property type="entry name" value="HISTIDYL-TRNA SYNTHETASE"/>
    <property type="match status" value="1"/>
</dbReference>
<dbReference type="Pfam" id="PF03129">
    <property type="entry name" value="HGTP_anticodon"/>
    <property type="match status" value="1"/>
</dbReference>
<dbReference type="Pfam" id="PF13393">
    <property type="entry name" value="tRNA-synt_His"/>
    <property type="match status" value="1"/>
</dbReference>
<dbReference type="PIRSF" id="PIRSF001549">
    <property type="entry name" value="His-tRNA_synth"/>
    <property type="match status" value="1"/>
</dbReference>
<dbReference type="SUPFAM" id="SSF52954">
    <property type="entry name" value="Class II aaRS ABD-related"/>
    <property type="match status" value="1"/>
</dbReference>
<dbReference type="SUPFAM" id="SSF55681">
    <property type="entry name" value="Class II aaRS and biotin synthetases"/>
    <property type="match status" value="1"/>
</dbReference>
<dbReference type="PROSITE" id="PS50862">
    <property type="entry name" value="AA_TRNA_LIGASE_II"/>
    <property type="match status" value="1"/>
</dbReference>
<evidence type="ECO:0000250" key="1"/>
<evidence type="ECO:0000305" key="2"/>
<sequence>MDIKTLKGFKDYLPKDSLIRIHIVRQIFSVLNSYNFDLIDTPVLEYSDLLLKKSGDETEKQIYRFKDNGGRDVSMRFDLTVPFARFVATNISALKLPFRRSQFGKVFRGENSQKGRYREFMQFDFDIVGEDTFRGDAEILSVVYYGLEEIFLNFIEGINKKFIIHYSHIGILNSFFEKLGLKEKSIFILRNIDKIDKIGIDKVKEALLLEIEKEAVDSILSLVSLQGTFKDKIQALKSILGDNESIKRVEDVFQHLSLLKIQDSFNLNLKISRGLDYYTGIVFESEVFGSNMGSVCSGGRYDNLVSSFSNSIQKISGVGGSFGVDRIKDIIDLEKFSYIKIFVTKARSKVLIVNLDSALQNYYYELATRFRNHDYSKVKNISCEVYFKNKNGKNIKEQIEYALSKEIRFLVFVGQEEYKENKMKVRDLTKKEELLLSFEESINLIKCNEKLLCTPF</sequence>
<organism>
    <name type="scientific">Borreliella burgdorferi (strain ATCC 35210 / DSM 4680 / CIP 102532 / B31)</name>
    <name type="common">Borrelia burgdorferi</name>
    <dbReference type="NCBI Taxonomy" id="224326"/>
    <lineage>
        <taxon>Bacteria</taxon>
        <taxon>Pseudomonadati</taxon>
        <taxon>Spirochaetota</taxon>
        <taxon>Spirochaetia</taxon>
        <taxon>Spirochaetales</taxon>
        <taxon>Borreliaceae</taxon>
        <taxon>Borreliella</taxon>
    </lineage>
</organism>
<protein>
    <recommendedName>
        <fullName>Histidine--tRNA ligase</fullName>
        <ecNumber>6.1.1.21</ecNumber>
    </recommendedName>
    <alternativeName>
        <fullName>Histidyl-tRNA synthetase</fullName>
        <shortName>HisRS</shortName>
    </alternativeName>
</protein>
<accession>O51160</accession>
<reference key="1">
    <citation type="journal article" date="1997" name="Nature">
        <title>Genomic sequence of a Lyme disease spirochaete, Borrelia burgdorferi.</title>
        <authorList>
            <person name="Fraser C.M."/>
            <person name="Casjens S."/>
            <person name="Huang W.M."/>
            <person name="Sutton G.G."/>
            <person name="Clayton R.A."/>
            <person name="Lathigra R."/>
            <person name="White O."/>
            <person name="Ketchum K.A."/>
            <person name="Dodson R.J."/>
            <person name="Hickey E.K."/>
            <person name="Gwinn M.L."/>
            <person name="Dougherty B.A."/>
            <person name="Tomb J.-F."/>
            <person name="Fleischmann R.D."/>
            <person name="Richardson D.L."/>
            <person name="Peterson J.D."/>
            <person name="Kerlavage A.R."/>
            <person name="Quackenbush J."/>
            <person name="Salzberg S.L."/>
            <person name="Hanson M."/>
            <person name="van Vugt R."/>
            <person name="Palmer N."/>
            <person name="Adams M.D."/>
            <person name="Gocayne J.D."/>
            <person name="Weidman J.F."/>
            <person name="Utterback T.R."/>
            <person name="Watthey L."/>
            <person name="McDonald L.A."/>
            <person name="Artiach P."/>
            <person name="Bowman C."/>
            <person name="Garland S.A."/>
            <person name="Fujii C."/>
            <person name="Cotton M.D."/>
            <person name="Horst K."/>
            <person name="Roberts K.M."/>
            <person name="Hatch B."/>
            <person name="Smith H.O."/>
            <person name="Venter J.C."/>
        </authorList>
    </citation>
    <scope>NUCLEOTIDE SEQUENCE [LARGE SCALE GENOMIC DNA]</scope>
    <source>
        <strain>ATCC 35210 / DSM 4680 / CIP 102532 / B31</strain>
    </source>
</reference>
<gene>
    <name type="primary">hisS</name>
    <name type="ordered locus">BB_0135</name>
</gene>
<feature type="chain" id="PRO_0000136120" description="Histidine--tRNA ligase">
    <location>
        <begin position="1"/>
        <end position="456"/>
    </location>
</feature>
<proteinExistence type="inferred from homology"/>
<name>SYH_BORBU</name>
<comment type="catalytic activity">
    <reaction>
        <text>tRNA(His) + L-histidine + ATP = L-histidyl-tRNA(His) + AMP + diphosphate + H(+)</text>
        <dbReference type="Rhea" id="RHEA:17313"/>
        <dbReference type="Rhea" id="RHEA-COMP:9665"/>
        <dbReference type="Rhea" id="RHEA-COMP:9689"/>
        <dbReference type="ChEBI" id="CHEBI:15378"/>
        <dbReference type="ChEBI" id="CHEBI:30616"/>
        <dbReference type="ChEBI" id="CHEBI:33019"/>
        <dbReference type="ChEBI" id="CHEBI:57595"/>
        <dbReference type="ChEBI" id="CHEBI:78442"/>
        <dbReference type="ChEBI" id="CHEBI:78527"/>
        <dbReference type="ChEBI" id="CHEBI:456215"/>
        <dbReference type="EC" id="6.1.1.21"/>
    </reaction>
</comment>
<comment type="subunit">
    <text evidence="1">Homodimer.</text>
</comment>
<comment type="subcellular location">
    <subcellularLocation>
        <location evidence="1">Cytoplasm</location>
    </subcellularLocation>
</comment>
<comment type="similarity">
    <text evidence="2">Belongs to the class-II aminoacyl-tRNA synthetase family.</text>
</comment>
<keyword id="KW-0030">Aminoacyl-tRNA synthetase</keyword>
<keyword id="KW-0067">ATP-binding</keyword>
<keyword id="KW-0963">Cytoplasm</keyword>
<keyword id="KW-0436">Ligase</keyword>
<keyword id="KW-0547">Nucleotide-binding</keyword>
<keyword id="KW-0648">Protein biosynthesis</keyword>
<keyword id="KW-1185">Reference proteome</keyword>